<proteinExistence type="evidence at protein level"/>
<feature type="chain" id="PRO_0000125442" description="Kinesin-like protein KIF9">
    <location>
        <begin position="1"/>
        <end position="790"/>
    </location>
</feature>
<feature type="domain" description="Kinesin motor" evidence="3">
    <location>
        <begin position="6"/>
        <end position="340"/>
    </location>
</feature>
<feature type="region of interest" description="Disordered" evidence="4">
    <location>
        <begin position="477"/>
        <end position="578"/>
    </location>
</feature>
<feature type="coiled-coil region" evidence="2">
    <location>
        <begin position="342"/>
        <end position="380"/>
    </location>
</feature>
<feature type="coiled-coil region" evidence="2">
    <location>
        <begin position="658"/>
        <end position="690"/>
    </location>
</feature>
<feature type="compositionally biased region" description="Polar residues" evidence="4">
    <location>
        <begin position="525"/>
        <end position="534"/>
    </location>
</feature>
<feature type="compositionally biased region" description="Basic and acidic residues" evidence="4">
    <location>
        <begin position="537"/>
        <end position="552"/>
    </location>
</feature>
<feature type="compositionally biased region" description="Basic and acidic residues" evidence="4">
    <location>
        <begin position="561"/>
        <end position="570"/>
    </location>
</feature>
<feature type="binding site">
    <location>
        <begin position="12"/>
        <end position="14"/>
    </location>
    <ligand>
        <name>ATP</name>
        <dbReference type="ChEBI" id="CHEBI:30616"/>
    </ligand>
</feature>
<feature type="binding site">
    <location>
        <begin position="93"/>
        <end position="100"/>
    </location>
    <ligand>
        <name>ATP</name>
        <dbReference type="ChEBI" id="CHEBI:30616"/>
    </ligand>
</feature>
<feature type="modified residue" description="Phosphothreonine" evidence="9">
    <location>
        <position position="530"/>
    </location>
</feature>
<feature type="modified residue" description="Phosphoserine" evidence="9">
    <location>
        <position position="546"/>
    </location>
</feature>
<feature type="splice variant" id="VSP_002868" description="In isoform 2." evidence="7">
    <location>
        <begin position="505"/>
        <end position="569"/>
    </location>
</feature>
<feature type="sequence variant" id="VAR_022139" description="In dbSNP:rs2270569.">
    <original>V</original>
    <variation>I</variation>
    <location>
        <position position="78"/>
    </location>
</feature>
<feature type="sequence variant" id="VAR_020443" description="In dbSNP:rs3733092.">
    <original>G</original>
    <variation>A</variation>
    <location>
        <position position="96"/>
    </location>
</feature>
<feature type="sequence variant" id="VAR_024513" description="In dbSNP:rs2276853." evidence="5 6">
    <original>R</original>
    <variation>W</variation>
    <location>
        <position position="638"/>
    </location>
</feature>
<feature type="strand" evidence="10">
    <location>
        <begin position="7"/>
        <end position="13"/>
    </location>
</feature>
<feature type="turn" evidence="10">
    <location>
        <begin position="21"/>
        <end position="23"/>
    </location>
</feature>
<feature type="strand" evidence="10">
    <location>
        <begin position="24"/>
        <end position="26"/>
    </location>
</feature>
<feature type="strand" evidence="10">
    <location>
        <begin position="30"/>
        <end position="36"/>
    </location>
</feature>
<feature type="helix" evidence="10">
    <location>
        <begin position="43"/>
        <end position="46"/>
    </location>
</feature>
<feature type="strand" evidence="10">
    <location>
        <begin position="52"/>
        <end position="56"/>
    </location>
</feature>
<feature type="strand" evidence="10">
    <location>
        <begin position="58"/>
        <end position="63"/>
    </location>
</feature>
<feature type="helix" evidence="10">
    <location>
        <begin position="66"/>
        <end position="73"/>
    </location>
</feature>
<feature type="helix" evidence="10">
    <location>
        <begin position="75"/>
        <end position="82"/>
    </location>
</feature>
<feature type="strand" evidence="10">
    <location>
        <begin position="87"/>
        <end position="94"/>
    </location>
</feature>
<feature type="helix" evidence="10">
    <location>
        <begin position="99"/>
        <end position="103"/>
    </location>
</feature>
<feature type="helix" evidence="10">
    <location>
        <begin position="110"/>
        <end position="112"/>
    </location>
</feature>
<feature type="helix" evidence="10">
    <location>
        <begin position="115"/>
        <end position="128"/>
    </location>
</feature>
<feature type="strand" evidence="10">
    <location>
        <begin position="133"/>
        <end position="145"/>
    </location>
</feature>
<feature type="strand" evidence="10">
    <location>
        <begin position="148"/>
        <end position="151"/>
    </location>
</feature>
<feature type="strand" evidence="10">
    <location>
        <begin position="154"/>
        <end position="156"/>
    </location>
</feature>
<feature type="turn" evidence="10">
    <location>
        <begin position="161"/>
        <end position="163"/>
    </location>
</feature>
<feature type="strand" evidence="10">
    <location>
        <begin position="167"/>
        <end position="171"/>
    </location>
</feature>
<feature type="strand" evidence="10">
    <location>
        <begin position="174"/>
        <end position="178"/>
    </location>
</feature>
<feature type="helix" evidence="10">
    <location>
        <begin position="188"/>
        <end position="209"/>
    </location>
</feature>
<feature type="helix" evidence="10">
    <location>
        <begin position="213"/>
        <end position="215"/>
    </location>
</feature>
<feature type="strand" evidence="10">
    <location>
        <begin position="217"/>
        <end position="227"/>
    </location>
</feature>
<feature type="strand" evidence="10">
    <location>
        <begin position="237"/>
        <end position="245"/>
    </location>
</feature>
<feature type="helix" evidence="10">
    <location>
        <begin position="271"/>
        <end position="283"/>
    </location>
</feature>
<feature type="helix" evidence="10">
    <location>
        <begin position="292"/>
        <end position="294"/>
    </location>
</feature>
<feature type="helix" evidence="10">
    <location>
        <begin position="296"/>
        <end position="300"/>
    </location>
</feature>
<feature type="helix" evidence="10">
    <location>
        <begin position="302"/>
        <end position="305"/>
    </location>
</feature>
<feature type="strand" evidence="10">
    <location>
        <begin position="306"/>
        <end position="317"/>
    </location>
</feature>
<feature type="helix" evidence="10">
    <location>
        <begin position="321"/>
        <end position="323"/>
    </location>
</feature>
<feature type="helix" evidence="10">
    <location>
        <begin position="324"/>
        <end position="334"/>
    </location>
</feature>
<feature type="helix" evidence="10">
    <location>
        <begin position="335"/>
        <end position="339"/>
    </location>
</feature>
<accession>Q9HAQ2</accession>
<accession>Q86Z28</accession>
<accession>Q9H8A4</accession>
<comment type="function">
    <text evidence="1">Essential for normal male fertility and for progressive motility of spermatozoa.</text>
</comment>
<comment type="subunit">
    <text evidence="1">Interacts with HYDIN.</text>
</comment>
<comment type="interaction">
    <interactant intactId="EBI-8472129">
        <id>Q9HAQ2</id>
    </interactant>
    <interactant intactId="EBI-16431307">
        <id>K7EM05</id>
        <label>ACBD4</label>
    </interactant>
    <organismsDiffer>false</organismsDiffer>
    <experiments>3</experiments>
</comment>
<comment type="interaction">
    <interactant intactId="EBI-8472129">
        <id>Q9HAQ2</id>
    </interactant>
    <interactant intactId="EBI-3905054">
        <id>P13196</id>
        <label>ALAS1</label>
    </interactant>
    <organismsDiffer>false</organismsDiffer>
    <experiments>3</experiments>
</comment>
<comment type="interaction">
    <interactant intactId="EBI-8472129">
        <id>Q9HAQ2</id>
    </interactant>
    <interactant intactId="EBI-746752">
        <id>Q9Y2J4</id>
        <label>AMOTL2</label>
    </interactant>
    <organismsDiffer>false</organismsDiffer>
    <experiments>3</experiments>
</comment>
<comment type="interaction">
    <interactant intactId="EBI-8472129">
        <id>Q9HAQ2</id>
    </interactant>
    <interactant intactId="EBI-718459">
        <id>Q9UII2</id>
        <label>ATP5IF1</label>
    </interactant>
    <organismsDiffer>false</organismsDiffer>
    <experiments>3</experiments>
</comment>
<comment type="interaction">
    <interactant intactId="EBI-8472129">
        <id>Q9HAQ2</id>
    </interactant>
    <interactant intactId="EBI-2548012">
        <id>Q9H2G9</id>
        <label>BLZF1</label>
    </interactant>
    <organismsDiffer>false</organismsDiffer>
    <experiments>3</experiments>
</comment>
<comment type="interaction">
    <interactant intactId="EBI-8472129">
        <id>Q9HAQ2</id>
    </interactant>
    <interactant intactId="EBI-11977221">
        <id>Q86Z20</id>
        <label>CCDC125</label>
    </interactant>
    <organismsDiffer>false</organismsDiffer>
    <experiments>3</experiments>
</comment>
<comment type="interaction">
    <interactant intactId="EBI-8472129">
        <id>Q9HAQ2</id>
    </interactant>
    <interactant intactId="EBI-997814">
        <id>O60759</id>
        <label>CYTIP</label>
    </interactant>
    <organismsDiffer>false</organismsDiffer>
    <experiments>3</experiments>
</comment>
<comment type="interaction">
    <interactant intactId="EBI-8472129">
        <id>Q9HAQ2</id>
    </interactant>
    <interactant intactId="EBI-11988027">
        <id>Q9NRI5-2</id>
        <label>DISC1</label>
    </interactant>
    <organismsDiffer>false</organismsDiffer>
    <experiments>3</experiments>
</comment>
<comment type="interaction">
    <interactant intactId="EBI-8472129">
        <id>Q9HAQ2</id>
    </interactant>
    <interactant intactId="EBI-489887">
        <id>P50402</id>
        <label>EMD</label>
    </interactant>
    <organismsDiffer>false</organismsDiffer>
    <experiments>3</experiments>
</comment>
<comment type="interaction">
    <interactant intactId="EBI-8472129">
        <id>Q9HAQ2</id>
    </interactant>
    <interactant intactId="EBI-11022345">
        <id>P51114-2</id>
        <label>FXR1</label>
    </interactant>
    <organismsDiffer>false</organismsDiffer>
    <experiments>3</experiments>
</comment>
<comment type="interaction">
    <interactant intactId="EBI-8472129">
        <id>Q9HAQ2</id>
    </interactant>
    <interactant intactId="EBI-11163335">
        <id>Q9NYA3</id>
        <label>GOLGA6A</label>
    </interactant>
    <organismsDiffer>false</organismsDiffer>
    <experiments>5</experiments>
</comment>
<comment type="interaction">
    <interactant intactId="EBI-8472129">
        <id>Q9HAQ2</id>
    </interactant>
    <interactant intactId="EBI-2549423">
        <id>Q6NT76</id>
        <label>HMBOX1</label>
    </interactant>
    <organismsDiffer>false</organismsDiffer>
    <experiments>3</experiments>
</comment>
<comment type="interaction">
    <interactant intactId="EBI-8472129">
        <id>Q9HAQ2</id>
    </interactant>
    <interactant intactId="EBI-10961706">
        <id>Q96ED9-2</id>
        <label>HOOK2</label>
    </interactant>
    <organismsDiffer>false</organismsDiffer>
    <experiments>3</experiments>
</comment>
<comment type="interaction">
    <interactant intactId="EBI-8472129">
        <id>Q9HAQ2</id>
    </interactant>
    <interactant intactId="EBI-7116203">
        <id>O75031</id>
        <label>HSF2BP</label>
    </interactant>
    <organismsDiffer>false</organismsDiffer>
    <experiments>3</experiments>
</comment>
<comment type="interaction">
    <interactant intactId="EBI-8472129">
        <id>Q9HAQ2</id>
    </interactant>
    <interactant intactId="EBI-8638439">
        <id>Q8IYA8</id>
        <label>IHO1</label>
    </interactant>
    <organismsDiffer>false</organismsDiffer>
    <experiments>3</experiments>
</comment>
<comment type="interaction">
    <interactant intactId="EBI-8472129">
        <id>Q9HAQ2</id>
    </interactant>
    <interactant intactId="EBI-747204">
        <id>Q9UKT9</id>
        <label>IKZF3</label>
    </interactant>
    <organismsDiffer>false</organismsDiffer>
    <experiments>3</experiments>
</comment>
<comment type="interaction">
    <interactant intactId="EBI-8472129">
        <id>Q9HAQ2</id>
    </interactant>
    <interactant intactId="EBI-10285157">
        <id>Q96EL1</id>
        <label>INKA1</label>
    </interactant>
    <organismsDiffer>false</organismsDiffer>
    <experiments>3</experiments>
</comment>
<comment type="interaction">
    <interactant intactId="EBI-8472129">
        <id>Q9HAQ2</id>
    </interactant>
    <interactant intactId="EBI-11944935">
        <id>Q15051-2</id>
        <label>IQCB1</label>
    </interactant>
    <organismsDiffer>false</organismsDiffer>
    <experiments>3</experiments>
</comment>
<comment type="interaction">
    <interactant intactId="EBI-8472129">
        <id>Q9HAQ2</id>
    </interactant>
    <interactant intactId="EBI-2556193">
        <id>Q63ZY3</id>
        <label>KANK2</label>
    </interactant>
    <organismsDiffer>false</organismsDiffer>
    <experiments>3</experiments>
</comment>
<comment type="interaction">
    <interactant intactId="EBI-8472129">
        <id>Q9HAQ2</id>
    </interactant>
    <interactant intactId="EBI-4397613">
        <id>Q7L273</id>
        <label>KCTD9</label>
    </interactant>
    <organismsDiffer>false</organismsDiffer>
    <experiments>3</experiments>
</comment>
<comment type="interaction">
    <interactant intactId="EBI-8472129">
        <id>Q9HAQ2</id>
    </interactant>
    <interactant intactId="EBI-2949715">
        <id>O95678</id>
        <label>KRT75</label>
    </interactant>
    <organismsDiffer>false</organismsDiffer>
    <experiments>3</experiments>
</comment>
<comment type="interaction">
    <interactant intactId="EBI-8472129">
        <id>Q9HAQ2</id>
    </interactant>
    <interactant intactId="EBI-12012928">
        <id>P60371</id>
        <label>KRTAP10-6</label>
    </interactant>
    <organismsDiffer>false</organismsDiffer>
    <experiments>3</experiments>
</comment>
<comment type="interaction">
    <interactant intactId="EBI-8472129">
        <id>Q9HAQ2</id>
    </interactant>
    <interactant intactId="EBI-1216080">
        <id>Q9Y250</id>
        <label>LZTS1</label>
    </interactant>
    <organismsDiffer>false</organismsDiffer>
    <experiments>3</experiments>
</comment>
<comment type="interaction">
    <interactant intactId="EBI-8472129">
        <id>Q9HAQ2</id>
    </interactant>
    <interactant intactId="EBI-742610">
        <id>Q9Y6D9</id>
        <label>MAD1L1</label>
    </interactant>
    <organismsDiffer>false</organismsDiffer>
    <experiments>3</experiments>
</comment>
<comment type="interaction">
    <interactant intactId="EBI-8472129">
        <id>Q9HAQ2</id>
    </interactant>
    <interactant intactId="EBI-2340316">
        <id>O15344</id>
        <label>MID1</label>
    </interactant>
    <organismsDiffer>false</organismsDiffer>
    <experiments>3</experiments>
</comment>
<comment type="interaction">
    <interactant intactId="EBI-8472129">
        <id>Q9HAQ2</id>
    </interactant>
    <interactant intactId="EBI-10172526">
        <id>Q9UJV3-2</id>
        <label>MID2</label>
    </interactant>
    <organismsDiffer>false</organismsDiffer>
    <experiments>3</experiments>
</comment>
<comment type="interaction">
    <interactant intactId="EBI-8472129">
        <id>Q9HAQ2</id>
    </interactant>
    <interactant intactId="EBI-2548751">
        <id>Q8TD10</id>
        <label>MIPOL1</label>
    </interactant>
    <organismsDiffer>false</organismsDiffer>
    <experiments>3</experiments>
</comment>
<comment type="interaction">
    <interactant intactId="EBI-8472129">
        <id>Q9HAQ2</id>
    </interactant>
    <interactant intactId="EBI-8641936">
        <id>Q15742</id>
        <label>NAB2</label>
    </interactant>
    <organismsDiffer>false</organismsDiffer>
    <experiments>3</experiments>
</comment>
<comment type="interaction">
    <interactant intactId="EBI-8472129">
        <id>Q9HAQ2</id>
    </interactant>
    <interactant intactId="EBI-536879">
        <id>O43482</id>
        <label>OIP5</label>
    </interactant>
    <organismsDiffer>false</organismsDiffer>
    <experiments>3</experiments>
</comment>
<comment type="interaction">
    <interactant intactId="EBI-8472129">
        <id>Q9HAQ2</id>
    </interactant>
    <interactant intactId="EBI-18583589">
        <id>A6NGQ2</id>
        <label>OOEP</label>
    </interactant>
    <organismsDiffer>false</organismsDiffer>
    <experiments>3</experiments>
</comment>
<comment type="interaction">
    <interactant intactId="EBI-8472129">
        <id>Q9HAQ2</id>
    </interactant>
    <interactant intactId="EBI-14066006">
        <id>Q4G0R1</id>
        <label>PIBF1</label>
    </interactant>
    <organismsDiffer>false</organismsDiffer>
    <experiments>3</experiments>
</comment>
<comment type="interaction">
    <interactant intactId="EBI-8472129">
        <id>Q9HAQ2</id>
    </interactant>
    <interactant intactId="EBI-10171633">
        <id>Q96PV4</id>
        <label>PNMA5</label>
    </interactant>
    <organismsDiffer>false</organismsDiffer>
    <experiments>3</experiments>
</comment>
<comment type="interaction">
    <interactant intactId="EBI-8472129">
        <id>Q9HAQ2</id>
    </interactant>
    <interactant intactId="EBI-1105153">
        <id>Q96KQ4</id>
        <label>PPP1R13B</label>
    </interactant>
    <organismsDiffer>false</organismsDiffer>
    <experiments>3</experiments>
</comment>
<comment type="interaction">
    <interactant intactId="EBI-8472129">
        <id>Q9HAQ2</id>
    </interactant>
    <interactant intactId="EBI-2348662">
        <id>Q96MT3</id>
        <label>PRICKLE1</label>
    </interactant>
    <organismsDiffer>false</organismsDiffer>
    <experiments>3</experiments>
</comment>
<comment type="interaction">
    <interactant intactId="EBI-8472129">
        <id>Q9HAQ2</id>
    </interactant>
    <interactant intactId="EBI-912440">
        <id>Q96LA8</id>
        <label>PRMT6</label>
    </interactant>
    <organismsDiffer>false</organismsDiffer>
    <experiments>2</experiments>
</comment>
<comment type="interaction">
    <interactant intactId="EBI-8472129">
        <id>Q9HAQ2</id>
    </interactant>
    <interactant intactId="EBI-473821">
        <id>Q5RL73</id>
        <label>RBM48</label>
    </interactant>
    <organismsDiffer>false</organismsDiffer>
    <experiments>3</experiments>
</comment>
<comment type="interaction">
    <interactant intactId="EBI-8472129">
        <id>Q9HAQ2</id>
    </interactant>
    <interactant intactId="EBI-12037847">
        <id>Q6ZSJ9</id>
        <label>SHISA6</label>
    </interactant>
    <organismsDiffer>false</organismsDiffer>
    <experiments>3</experiments>
</comment>
<comment type="interaction">
    <interactant intactId="EBI-8472129">
        <id>Q9HAQ2</id>
    </interactant>
    <interactant intactId="EBI-10269374">
        <id>Q8ND83</id>
        <label>SLAIN1</label>
    </interactant>
    <organismsDiffer>false</organismsDiffer>
    <experiments>3</experiments>
</comment>
<comment type="interaction">
    <interactant intactId="EBI-8472129">
        <id>Q9HAQ2</id>
    </interactant>
    <interactant intactId="EBI-1053419">
        <id>Q9H5V9</id>
        <label>STEEP1</label>
    </interactant>
    <organismsDiffer>false</organismsDiffer>
    <experiments>3</experiments>
</comment>
<comment type="interaction">
    <interactant intactId="EBI-8472129">
        <id>Q9HAQ2</id>
    </interactant>
    <interactant intactId="EBI-1105213">
        <id>Q9UBB9</id>
        <label>TFIP11</label>
    </interactant>
    <organismsDiffer>false</organismsDiffer>
    <experiments>3</experiments>
</comment>
<comment type="interaction">
    <interactant intactId="EBI-8472129">
        <id>Q9HAQ2</id>
    </interactant>
    <interactant intactId="EBI-2130429">
        <id>Q9BYV2</id>
        <label>TRIM54</label>
    </interactant>
    <organismsDiffer>false</organismsDiffer>
    <experiments>3</experiments>
</comment>
<comment type="interaction">
    <interactant intactId="EBI-8472129">
        <id>Q9HAQ2</id>
    </interactant>
    <interactant intactId="EBI-353844">
        <id>P08670</id>
        <label>VIM</label>
    </interactant>
    <organismsDiffer>false</organismsDiffer>
    <experiments>3</experiments>
</comment>
<comment type="interaction">
    <interactant intactId="EBI-8472129">
        <id>Q9HAQ2</id>
    </interactant>
    <interactant intactId="EBI-2799833">
        <id>Q8N1B4</id>
        <label>VPS52</label>
    </interactant>
    <organismsDiffer>false</organismsDiffer>
    <experiments>3</experiments>
</comment>
<comment type="interaction">
    <interactant intactId="EBI-8472129">
        <id>Q9HAQ2</id>
    </interactant>
    <interactant intactId="EBI-742740">
        <id>Q96BR9</id>
        <label>ZBTB8A</label>
    </interactant>
    <organismsDiffer>false</organismsDiffer>
    <experiments>3</experiments>
</comment>
<comment type="interaction">
    <interactant intactId="EBI-8472129">
        <id>Q9HAQ2</id>
    </interactant>
    <interactant intactId="EBI-14104088">
        <id>Q53FD0-2</id>
        <label>ZC2HC1C</label>
    </interactant>
    <organismsDiffer>false</organismsDiffer>
    <experiments>3</experiments>
</comment>
<comment type="interaction">
    <interactant intactId="EBI-8472129">
        <id>Q9HAQ2</id>
    </interactant>
    <interactant intactId="EBI-7265024">
        <id>Q8N3Z6</id>
        <label>ZCCHC7</label>
    </interactant>
    <organismsDiffer>false</organismsDiffer>
    <experiments>3</experiments>
</comment>
<comment type="interaction">
    <interactant intactId="EBI-8472129">
        <id>Q9HAQ2</id>
    </interactant>
    <interactant intactId="EBI-740727">
        <id>Q8TAU3</id>
        <label>ZNF417</label>
    </interactant>
    <organismsDiffer>false</organismsDiffer>
    <experiments>3</experiments>
</comment>
<comment type="interaction">
    <interactant intactId="EBI-8472129">
        <id>Q9HAQ2</id>
    </interactant>
    <interactant intactId="EBI-8489702">
        <id>Q9C0F3</id>
        <label>ZNF436</label>
    </interactant>
    <organismsDiffer>false</organismsDiffer>
    <experiments>3</experiments>
</comment>
<comment type="interaction">
    <interactant intactId="EBI-8472129">
        <id>Q9HAQ2</id>
    </interactant>
    <interactant intactId="EBI-2555762">
        <id>Q969W8</id>
        <label>ZNF566</label>
    </interactant>
    <organismsDiffer>false</organismsDiffer>
    <experiments>3</experiments>
</comment>
<comment type="interaction">
    <interactant intactId="EBI-8472129">
        <id>Q9HAQ2</id>
    </interactant>
    <interactant intactId="EBI-10172590">
        <id>Q7Z3I7</id>
        <label>ZNF572</label>
    </interactant>
    <organismsDiffer>false</organismsDiffer>
    <experiments>3</experiments>
</comment>
<comment type="interaction">
    <interactant intactId="EBI-8472129">
        <id>Q9HAQ2</id>
    </interactant>
    <interactant intactId="EBI-527853">
        <id>Q9UGI0</id>
        <label>ZRANB1</label>
    </interactant>
    <organismsDiffer>false</organismsDiffer>
    <experiments>3</experiments>
</comment>
<comment type="subcellular location">
    <subcellularLocation>
        <location evidence="8">Cytoplasm</location>
        <location evidence="8">Cytoskeleton</location>
    </subcellularLocation>
    <subcellularLocation>
        <location evidence="1">Cell projection</location>
        <location evidence="1">Cilium</location>
        <location evidence="1">Flagellum</location>
    </subcellularLocation>
    <subcellularLocation>
        <location evidence="1">Cytoplasm</location>
        <location evidence="1">Cytoskeleton</location>
        <location evidence="1">Flagellum axoneme</location>
    </subcellularLocation>
</comment>
<comment type="alternative products">
    <event type="alternative splicing"/>
    <isoform>
        <id>Q9HAQ2-1</id>
        <name>1</name>
        <sequence type="displayed"/>
    </isoform>
    <isoform>
        <id>Q9HAQ2-2</id>
        <name>2</name>
        <sequence type="described" ref="VSP_002868"/>
    </isoform>
    <text>Experimental confirmation may be lacking for some isoforms.</text>
</comment>
<comment type="similarity">
    <text evidence="3">Belongs to the TRAFAC class myosin-kinesin ATPase superfamily. Kinesin family.</text>
</comment>
<comment type="sequence caution" evidence="8">
    <conflict type="miscellaneous discrepancy">
        <sequence resource="EMBL-CDS" id="BAB14713"/>
    </conflict>
    <text>Dubious isoform. Probable cloning artifact lacking polyadenylation evidence.</text>
</comment>
<evidence type="ECO:0000250" key="1">
    <source>
        <dbReference type="UniProtKB" id="Q9WV04"/>
    </source>
</evidence>
<evidence type="ECO:0000255" key="2"/>
<evidence type="ECO:0000255" key="3">
    <source>
        <dbReference type="PROSITE-ProRule" id="PRU00283"/>
    </source>
</evidence>
<evidence type="ECO:0000256" key="4">
    <source>
        <dbReference type="SAM" id="MobiDB-lite"/>
    </source>
</evidence>
<evidence type="ECO:0000269" key="5">
    <source>
    </source>
</evidence>
<evidence type="ECO:0000269" key="6">
    <source>
    </source>
</evidence>
<evidence type="ECO:0000303" key="7">
    <source ref="1"/>
</evidence>
<evidence type="ECO:0000305" key="8"/>
<evidence type="ECO:0007744" key="9">
    <source>
    </source>
</evidence>
<evidence type="ECO:0007829" key="10">
    <source>
        <dbReference type="PDB" id="3NWN"/>
    </source>
</evidence>
<keyword id="KW-0002">3D-structure</keyword>
<keyword id="KW-0025">Alternative splicing</keyword>
<keyword id="KW-0067">ATP-binding</keyword>
<keyword id="KW-0966">Cell projection</keyword>
<keyword id="KW-0969">Cilium</keyword>
<keyword id="KW-0175">Coiled coil</keyword>
<keyword id="KW-0963">Cytoplasm</keyword>
<keyword id="KW-0206">Cytoskeleton</keyword>
<keyword id="KW-0282">Flagellum</keyword>
<keyword id="KW-0493">Microtubule</keyword>
<keyword id="KW-0505">Motor protein</keyword>
<keyword id="KW-0547">Nucleotide-binding</keyword>
<keyword id="KW-0597">Phosphoprotein</keyword>
<keyword id="KW-1267">Proteomics identification</keyword>
<keyword id="KW-1185">Reference proteome</keyword>
<dbReference type="EMBL" id="AF311212">
    <property type="protein sequence ID" value="AAG33849.1"/>
    <property type="molecule type" value="mRNA"/>
</dbReference>
<dbReference type="EMBL" id="AC104447">
    <property type="status" value="NOT_ANNOTATED_CDS"/>
    <property type="molecule type" value="Genomic_DNA"/>
</dbReference>
<dbReference type="EMBL" id="BC030657">
    <property type="protein sequence ID" value="AAH30657.1"/>
    <property type="molecule type" value="mRNA"/>
</dbReference>
<dbReference type="EMBL" id="AK023894">
    <property type="protein sequence ID" value="BAB14713.1"/>
    <property type="status" value="ALT_SEQ"/>
    <property type="molecule type" value="mRNA"/>
</dbReference>
<dbReference type="CCDS" id="CCDS2751.1">
    <molecule id="Q9HAQ2-2"/>
</dbReference>
<dbReference type="CCDS" id="CCDS2752.1">
    <molecule id="Q9HAQ2-1"/>
</dbReference>
<dbReference type="RefSeq" id="NP_001128350.1">
    <molecule id="Q9HAQ2-1"/>
    <property type="nucleotide sequence ID" value="NM_001134878.3"/>
</dbReference>
<dbReference type="RefSeq" id="NP_071737.1">
    <molecule id="Q9HAQ2-2"/>
    <property type="nucleotide sequence ID" value="NM_022342.6"/>
</dbReference>
<dbReference type="RefSeq" id="NP_878905.2">
    <molecule id="Q9HAQ2-1"/>
    <property type="nucleotide sequence ID" value="NM_182902.4"/>
</dbReference>
<dbReference type="RefSeq" id="XP_011532306.1">
    <property type="nucleotide sequence ID" value="XM_011534004.2"/>
</dbReference>
<dbReference type="RefSeq" id="XP_016862518.1">
    <molecule id="Q9HAQ2-1"/>
    <property type="nucleotide sequence ID" value="XM_017007029.2"/>
</dbReference>
<dbReference type="RefSeq" id="XP_047304665.1">
    <molecule id="Q9HAQ2-1"/>
    <property type="nucleotide sequence ID" value="XM_047448709.1"/>
</dbReference>
<dbReference type="PDB" id="3NWN">
    <property type="method" value="X-ray"/>
    <property type="resolution" value="2.00 A"/>
    <property type="chains" value="A=1-340"/>
</dbReference>
<dbReference type="PDBsum" id="3NWN"/>
<dbReference type="SMR" id="Q9HAQ2"/>
<dbReference type="BioGRID" id="122086">
    <property type="interactions" value="73"/>
</dbReference>
<dbReference type="FunCoup" id="Q9HAQ2">
    <property type="interactions" value="118"/>
</dbReference>
<dbReference type="IntAct" id="Q9HAQ2">
    <property type="interactions" value="56"/>
</dbReference>
<dbReference type="MINT" id="Q9HAQ2"/>
<dbReference type="STRING" id="9606.ENSP00000333942"/>
<dbReference type="ChEMBL" id="CHEMBL2321637"/>
<dbReference type="iPTMnet" id="Q9HAQ2"/>
<dbReference type="PhosphoSitePlus" id="Q9HAQ2"/>
<dbReference type="BioMuta" id="KIF9"/>
<dbReference type="DMDM" id="308153656"/>
<dbReference type="jPOST" id="Q9HAQ2"/>
<dbReference type="MassIVE" id="Q9HAQ2"/>
<dbReference type="PaxDb" id="9606-ENSP00000333942"/>
<dbReference type="PeptideAtlas" id="Q9HAQ2"/>
<dbReference type="ProteomicsDB" id="81418">
    <molecule id="Q9HAQ2-1"/>
</dbReference>
<dbReference type="ProteomicsDB" id="81419">
    <molecule id="Q9HAQ2-2"/>
</dbReference>
<dbReference type="Antibodypedia" id="12887">
    <property type="antibodies" value="120 antibodies from 20 providers"/>
</dbReference>
<dbReference type="DNASU" id="64147"/>
<dbReference type="Ensembl" id="ENST00000265529.7">
    <molecule id="Q9HAQ2-1"/>
    <property type="protein sequence ID" value="ENSP00000265529.3"/>
    <property type="gene ID" value="ENSG00000088727.14"/>
</dbReference>
<dbReference type="Ensembl" id="ENST00000444589.6">
    <molecule id="Q9HAQ2-2"/>
    <property type="protein sequence ID" value="ENSP00000414987.2"/>
    <property type="gene ID" value="ENSG00000088727.14"/>
</dbReference>
<dbReference type="Ensembl" id="ENST00000452770.6">
    <molecule id="Q9HAQ2-1"/>
    <property type="protein sequence ID" value="ENSP00000391100.2"/>
    <property type="gene ID" value="ENSG00000088727.14"/>
</dbReference>
<dbReference type="Ensembl" id="ENST00000684063.1">
    <molecule id="Q9HAQ2-1"/>
    <property type="protein sequence ID" value="ENSP00000507186.1"/>
    <property type="gene ID" value="ENSG00000088727.14"/>
</dbReference>
<dbReference type="GeneID" id="64147"/>
<dbReference type="KEGG" id="hsa:64147"/>
<dbReference type="MANE-Select" id="ENST00000684063.1">
    <property type="protein sequence ID" value="ENSP00000507186.1"/>
    <property type="RefSeq nucleotide sequence ID" value="NM_182902.4"/>
    <property type="RefSeq protein sequence ID" value="NP_878905.2"/>
</dbReference>
<dbReference type="UCSC" id="uc003cqx.3">
    <molecule id="Q9HAQ2-1"/>
    <property type="organism name" value="human"/>
</dbReference>
<dbReference type="AGR" id="HGNC:16666"/>
<dbReference type="CTD" id="64147"/>
<dbReference type="DisGeNET" id="64147"/>
<dbReference type="GeneCards" id="KIF9"/>
<dbReference type="HGNC" id="HGNC:16666">
    <property type="gene designation" value="KIF9"/>
</dbReference>
<dbReference type="HPA" id="ENSG00000088727">
    <property type="expression patterns" value="Tissue enhanced (choroid plexus, testis)"/>
</dbReference>
<dbReference type="MIM" id="607910">
    <property type="type" value="gene"/>
</dbReference>
<dbReference type="neXtProt" id="NX_Q9HAQ2"/>
<dbReference type="OpenTargets" id="ENSG00000088727"/>
<dbReference type="PharmGKB" id="PA30110"/>
<dbReference type="VEuPathDB" id="HostDB:ENSG00000088727"/>
<dbReference type="eggNOG" id="KOG4280">
    <property type="taxonomic scope" value="Eukaryota"/>
</dbReference>
<dbReference type="GeneTree" id="ENSGT00940000158533"/>
<dbReference type="HOGENOM" id="CLU_001485_16_2_1"/>
<dbReference type="InParanoid" id="Q9HAQ2"/>
<dbReference type="OMA" id="LMFACIW"/>
<dbReference type="OrthoDB" id="3176171at2759"/>
<dbReference type="PAN-GO" id="Q9HAQ2">
    <property type="GO annotations" value="6 GO annotations based on evolutionary models"/>
</dbReference>
<dbReference type="PhylomeDB" id="Q9HAQ2"/>
<dbReference type="TreeFam" id="TF105229"/>
<dbReference type="PathwayCommons" id="Q9HAQ2"/>
<dbReference type="Reactome" id="R-HSA-6811434">
    <property type="pathway name" value="COPI-dependent Golgi-to-ER retrograde traffic"/>
</dbReference>
<dbReference type="Reactome" id="R-HSA-983189">
    <property type="pathway name" value="Kinesins"/>
</dbReference>
<dbReference type="SignaLink" id="Q9HAQ2"/>
<dbReference type="BioGRID-ORCS" id="64147">
    <property type="hits" value="20 hits in 1161 CRISPR screens"/>
</dbReference>
<dbReference type="ChiTaRS" id="KIF9">
    <property type="organism name" value="human"/>
</dbReference>
<dbReference type="EvolutionaryTrace" id="Q9HAQ2"/>
<dbReference type="GenomeRNAi" id="64147"/>
<dbReference type="Pharos" id="Q9HAQ2">
    <property type="development level" value="Tbio"/>
</dbReference>
<dbReference type="PRO" id="PR:Q9HAQ2"/>
<dbReference type="Proteomes" id="UP000005640">
    <property type="component" value="Chromosome 3"/>
</dbReference>
<dbReference type="RNAct" id="Q9HAQ2">
    <property type="molecule type" value="protein"/>
</dbReference>
<dbReference type="Bgee" id="ENSG00000088727">
    <property type="expression patterns" value="Expressed in bronchial epithelial cell and 182 other cell types or tissues"/>
</dbReference>
<dbReference type="ExpressionAtlas" id="Q9HAQ2">
    <property type="expression patterns" value="baseline and differential"/>
</dbReference>
<dbReference type="GO" id="GO:0005737">
    <property type="term" value="C:cytoplasm"/>
    <property type="evidence" value="ECO:0000318"/>
    <property type="project" value="GO_Central"/>
</dbReference>
<dbReference type="GO" id="GO:0005871">
    <property type="term" value="C:kinesin complex"/>
    <property type="evidence" value="ECO:0000318"/>
    <property type="project" value="GO_Central"/>
</dbReference>
<dbReference type="GO" id="GO:0005874">
    <property type="term" value="C:microtubule"/>
    <property type="evidence" value="ECO:0000314"/>
    <property type="project" value="UniProtKB"/>
</dbReference>
<dbReference type="GO" id="GO:0002102">
    <property type="term" value="C:podosome"/>
    <property type="evidence" value="ECO:0000314"/>
    <property type="project" value="UniProtKB"/>
</dbReference>
<dbReference type="GO" id="GO:0036126">
    <property type="term" value="C:sperm flagellum"/>
    <property type="evidence" value="ECO:0000250"/>
    <property type="project" value="UniProtKB"/>
</dbReference>
<dbReference type="GO" id="GO:0031982">
    <property type="term" value="C:vesicle"/>
    <property type="evidence" value="ECO:0000314"/>
    <property type="project" value="UniProtKB"/>
</dbReference>
<dbReference type="GO" id="GO:0005524">
    <property type="term" value="F:ATP binding"/>
    <property type="evidence" value="ECO:0007669"/>
    <property type="project" value="UniProtKB-KW"/>
</dbReference>
<dbReference type="GO" id="GO:0016887">
    <property type="term" value="F:ATP hydrolysis activity"/>
    <property type="evidence" value="ECO:0000318"/>
    <property type="project" value="GO_Central"/>
</dbReference>
<dbReference type="GO" id="GO:0042802">
    <property type="term" value="F:identical protein binding"/>
    <property type="evidence" value="ECO:0000353"/>
    <property type="project" value="UniProtKB"/>
</dbReference>
<dbReference type="GO" id="GO:0008017">
    <property type="term" value="F:microtubule binding"/>
    <property type="evidence" value="ECO:0000318"/>
    <property type="project" value="GO_Central"/>
</dbReference>
<dbReference type="GO" id="GO:0003777">
    <property type="term" value="F:microtubule motor activity"/>
    <property type="evidence" value="ECO:0000318"/>
    <property type="project" value="GO_Central"/>
</dbReference>
<dbReference type="GO" id="GO:0022617">
    <property type="term" value="P:extracellular matrix disassembly"/>
    <property type="evidence" value="ECO:0000315"/>
    <property type="project" value="UniProtKB"/>
</dbReference>
<dbReference type="GO" id="GO:0007018">
    <property type="term" value="P:microtubule-based movement"/>
    <property type="evidence" value="ECO:0000318"/>
    <property type="project" value="GO_Central"/>
</dbReference>
<dbReference type="GO" id="GO:1903008">
    <property type="term" value="P:organelle disassembly"/>
    <property type="evidence" value="ECO:0000315"/>
    <property type="project" value="UniProtKB"/>
</dbReference>
<dbReference type="GO" id="GO:1901317">
    <property type="term" value="P:regulation of flagellated sperm motility"/>
    <property type="evidence" value="ECO:0000250"/>
    <property type="project" value="UniProtKB"/>
</dbReference>
<dbReference type="GO" id="GO:0071801">
    <property type="term" value="P:regulation of podosome assembly"/>
    <property type="evidence" value="ECO:0000315"/>
    <property type="project" value="UniProtKB"/>
</dbReference>
<dbReference type="CDD" id="cd01375">
    <property type="entry name" value="KISc_KIF9_like"/>
    <property type="match status" value="1"/>
</dbReference>
<dbReference type="FunFam" id="3.40.850.10:FF:000040">
    <property type="entry name" value="Kinesin-like protein"/>
    <property type="match status" value="1"/>
</dbReference>
<dbReference type="Gene3D" id="3.40.850.10">
    <property type="entry name" value="Kinesin motor domain"/>
    <property type="match status" value="1"/>
</dbReference>
<dbReference type="InterPro" id="IPR056524">
    <property type="entry name" value="KIF6/9_C"/>
</dbReference>
<dbReference type="InterPro" id="IPR027640">
    <property type="entry name" value="Kinesin-like_fam"/>
</dbReference>
<dbReference type="InterPro" id="IPR019821">
    <property type="entry name" value="Kinesin_motor_CS"/>
</dbReference>
<dbReference type="InterPro" id="IPR001752">
    <property type="entry name" value="Kinesin_motor_dom"/>
</dbReference>
<dbReference type="InterPro" id="IPR036961">
    <property type="entry name" value="Kinesin_motor_dom_sf"/>
</dbReference>
<dbReference type="InterPro" id="IPR027417">
    <property type="entry name" value="P-loop_NTPase"/>
</dbReference>
<dbReference type="PANTHER" id="PTHR47968">
    <property type="entry name" value="CENTROMERE PROTEIN E"/>
    <property type="match status" value="1"/>
</dbReference>
<dbReference type="PANTHER" id="PTHR47968:SF62">
    <property type="entry name" value="KINESIN FAMILY MEMBER 5A"/>
    <property type="match status" value="1"/>
</dbReference>
<dbReference type="Pfam" id="PF23735">
    <property type="entry name" value="KIF9"/>
    <property type="match status" value="1"/>
</dbReference>
<dbReference type="Pfam" id="PF00225">
    <property type="entry name" value="Kinesin"/>
    <property type="match status" value="1"/>
</dbReference>
<dbReference type="PRINTS" id="PR00380">
    <property type="entry name" value="KINESINHEAVY"/>
</dbReference>
<dbReference type="SMART" id="SM00129">
    <property type="entry name" value="KISc"/>
    <property type="match status" value="1"/>
</dbReference>
<dbReference type="SUPFAM" id="SSF52540">
    <property type="entry name" value="P-loop containing nucleoside triphosphate hydrolases"/>
    <property type="match status" value="1"/>
</dbReference>
<dbReference type="PROSITE" id="PS00411">
    <property type="entry name" value="KINESIN_MOTOR_1"/>
    <property type="match status" value="1"/>
</dbReference>
<dbReference type="PROSITE" id="PS50067">
    <property type="entry name" value="KINESIN_MOTOR_2"/>
    <property type="match status" value="1"/>
</dbReference>
<gene>
    <name type="primary">KIF9</name>
</gene>
<organism>
    <name type="scientific">Homo sapiens</name>
    <name type="common">Human</name>
    <dbReference type="NCBI Taxonomy" id="9606"/>
    <lineage>
        <taxon>Eukaryota</taxon>
        <taxon>Metazoa</taxon>
        <taxon>Chordata</taxon>
        <taxon>Craniata</taxon>
        <taxon>Vertebrata</taxon>
        <taxon>Euteleostomi</taxon>
        <taxon>Mammalia</taxon>
        <taxon>Eutheria</taxon>
        <taxon>Euarchontoglires</taxon>
        <taxon>Primates</taxon>
        <taxon>Haplorrhini</taxon>
        <taxon>Catarrhini</taxon>
        <taxon>Hominidae</taxon>
        <taxon>Homo</taxon>
    </lineage>
</organism>
<name>KIF9_HUMAN</name>
<protein>
    <recommendedName>
        <fullName>Kinesin-like protein KIF9</fullName>
    </recommendedName>
</protein>
<sequence length="790" mass="89986">MGTRKKVHAFVRVKPTDDFAHEMIRYGDDKRSIDIHLKKDIRRGVVNNQQTDWSFKLDGVLHDASQDLVYETVAKDVVSQALDGYNGTIMCYGQTGAGKTYTMMGATENYKHRGILPRALQQVFRMIEERPTHAITVRVSYLEIYNESLFDLLSTLPYVGPSVTPMTIVENPQGVFIKGLSVHLTSQEEDAFSLLFEGETNRIIASHTMNKNSSRSHCIFTIYLEAHSRTLSEEKYITSKINLVDLAGSERLGKSGSEGQVLKEATYINKSLSFLEQAIIALGDQKRDHIPFRQCKLTHALKDSLGGNCNMVLVTNIYGEAAQLEETLSSLRFASRMKLVTTEPAINEKYDAERMVKNLEKELALLKQELAIHDSLTNRTFVTYDPMDEIQIAEINSQVRRYLEGTLDEIDIISLRQIKEVFNQFRVVLSQQEQEVESTLRRKYTLIDRNDFAAISAIQKAGLVDVDGHLVGEPEGQNFGLGVAPFSTKPGKKAKSKKTFKEPLSSLARKEGASSPVNGKDLDYVSTSKTQLVPSSKDGDVKDMLSRDRETSSIEPLPSDSPKEELRPIRPDTPPSKPVAFEEFKNEQGSEINRIFKENKSILNERRKRASETTQHINAIKREIDVTKEALNFQKSLREKQGKYENKGLMIIDEEEFLLILKLKDLKKQYRSEYQDLRDLRAEIQYCQHLVDQCRHRLLMEFDIWYNESFVIPEDMQMALKPGGSIRPGMVPVNRIVSLGEDDQDKFSQLQQRVLPEGPDSISFYNAKVKIEQKHNYLKTMMGLQQAHRK</sequence>
<reference key="1">
    <citation type="submission" date="2000-10" db="EMBL/GenBank/DDBJ databases">
        <title>Human kinesin protein 9, highly similar to Mus musculus mRNA for kinesin like protein 9.</title>
        <authorList>
            <person name="Li J.M."/>
            <person name="Sha J.H."/>
            <person name="Zhou Z.M."/>
        </authorList>
    </citation>
    <scope>NUCLEOTIDE SEQUENCE [MRNA] (ISOFORM 2)</scope>
    <source>
        <tissue>Testis</tissue>
    </source>
</reference>
<reference key="2">
    <citation type="journal article" date="2006" name="Nature">
        <title>The DNA sequence, annotation and analysis of human chromosome 3.</title>
        <authorList>
            <person name="Muzny D.M."/>
            <person name="Scherer S.E."/>
            <person name="Kaul R."/>
            <person name="Wang J."/>
            <person name="Yu J."/>
            <person name="Sudbrak R."/>
            <person name="Buhay C.J."/>
            <person name="Chen R."/>
            <person name="Cree A."/>
            <person name="Ding Y."/>
            <person name="Dugan-Rocha S."/>
            <person name="Gill R."/>
            <person name="Gunaratne P."/>
            <person name="Harris R.A."/>
            <person name="Hawes A.C."/>
            <person name="Hernandez J."/>
            <person name="Hodgson A.V."/>
            <person name="Hume J."/>
            <person name="Jackson A."/>
            <person name="Khan Z.M."/>
            <person name="Kovar-Smith C."/>
            <person name="Lewis L.R."/>
            <person name="Lozado R.J."/>
            <person name="Metzker M.L."/>
            <person name="Milosavljevic A."/>
            <person name="Miner G.R."/>
            <person name="Morgan M.B."/>
            <person name="Nazareth L.V."/>
            <person name="Scott G."/>
            <person name="Sodergren E."/>
            <person name="Song X.-Z."/>
            <person name="Steffen D."/>
            <person name="Wei S."/>
            <person name="Wheeler D.A."/>
            <person name="Wright M.W."/>
            <person name="Worley K.C."/>
            <person name="Yuan Y."/>
            <person name="Zhang Z."/>
            <person name="Adams C.Q."/>
            <person name="Ansari-Lari M.A."/>
            <person name="Ayele M."/>
            <person name="Brown M.J."/>
            <person name="Chen G."/>
            <person name="Chen Z."/>
            <person name="Clendenning J."/>
            <person name="Clerc-Blankenburg K.P."/>
            <person name="Chen R."/>
            <person name="Chen Z."/>
            <person name="Davis C."/>
            <person name="Delgado O."/>
            <person name="Dinh H.H."/>
            <person name="Dong W."/>
            <person name="Draper H."/>
            <person name="Ernst S."/>
            <person name="Fu G."/>
            <person name="Gonzalez-Garay M.L."/>
            <person name="Garcia D.K."/>
            <person name="Gillett W."/>
            <person name="Gu J."/>
            <person name="Hao B."/>
            <person name="Haugen E."/>
            <person name="Havlak P."/>
            <person name="He X."/>
            <person name="Hennig S."/>
            <person name="Hu S."/>
            <person name="Huang W."/>
            <person name="Jackson L.R."/>
            <person name="Jacob L.S."/>
            <person name="Kelly S.H."/>
            <person name="Kube M."/>
            <person name="Levy R."/>
            <person name="Li Z."/>
            <person name="Liu B."/>
            <person name="Liu J."/>
            <person name="Liu W."/>
            <person name="Lu J."/>
            <person name="Maheshwari M."/>
            <person name="Nguyen B.-V."/>
            <person name="Okwuonu G.O."/>
            <person name="Palmeiri A."/>
            <person name="Pasternak S."/>
            <person name="Perez L.M."/>
            <person name="Phelps K.A."/>
            <person name="Plopper F.J."/>
            <person name="Qiang B."/>
            <person name="Raymond C."/>
            <person name="Rodriguez R."/>
            <person name="Saenphimmachak C."/>
            <person name="Santibanez J."/>
            <person name="Shen H."/>
            <person name="Shen Y."/>
            <person name="Subramanian S."/>
            <person name="Tabor P.E."/>
            <person name="Verduzco D."/>
            <person name="Waldron L."/>
            <person name="Wang J."/>
            <person name="Wang J."/>
            <person name="Wang Q."/>
            <person name="Williams G.A."/>
            <person name="Wong G.K.-S."/>
            <person name="Yao Z."/>
            <person name="Zhang J."/>
            <person name="Zhang X."/>
            <person name="Zhao G."/>
            <person name="Zhou J."/>
            <person name="Zhou Y."/>
            <person name="Nelson D."/>
            <person name="Lehrach H."/>
            <person name="Reinhardt R."/>
            <person name="Naylor S.L."/>
            <person name="Yang H."/>
            <person name="Olson M."/>
            <person name="Weinstock G."/>
            <person name="Gibbs R.A."/>
        </authorList>
    </citation>
    <scope>NUCLEOTIDE SEQUENCE [LARGE SCALE GENOMIC DNA]</scope>
</reference>
<reference key="3">
    <citation type="journal article" date="2004" name="Genome Res.">
        <title>The status, quality, and expansion of the NIH full-length cDNA project: the Mammalian Gene Collection (MGC).</title>
        <authorList>
            <consortium name="The MGC Project Team"/>
        </authorList>
    </citation>
    <scope>NUCLEOTIDE SEQUENCE [LARGE SCALE MRNA] (ISOFORM 1)</scope>
    <scope>VARIANT TRP-638</scope>
    <source>
        <tissue>Testis</tissue>
    </source>
</reference>
<reference key="4">
    <citation type="journal article" date="2004" name="Nat. Genet.">
        <title>Complete sequencing and characterization of 21,243 full-length human cDNAs.</title>
        <authorList>
            <person name="Ota T."/>
            <person name="Suzuki Y."/>
            <person name="Nishikawa T."/>
            <person name="Otsuki T."/>
            <person name="Sugiyama T."/>
            <person name="Irie R."/>
            <person name="Wakamatsu A."/>
            <person name="Hayashi K."/>
            <person name="Sato H."/>
            <person name="Nagai K."/>
            <person name="Kimura K."/>
            <person name="Makita H."/>
            <person name="Sekine M."/>
            <person name="Obayashi M."/>
            <person name="Nishi T."/>
            <person name="Shibahara T."/>
            <person name="Tanaka T."/>
            <person name="Ishii S."/>
            <person name="Yamamoto J."/>
            <person name="Saito K."/>
            <person name="Kawai Y."/>
            <person name="Isono Y."/>
            <person name="Nakamura Y."/>
            <person name="Nagahari K."/>
            <person name="Murakami K."/>
            <person name="Yasuda T."/>
            <person name="Iwayanagi T."/>
            <person name="Wagatsuma M."/>
            <person name="Shiratori A."/>
            <person name="Sudo H."/>
            <person name="Hosoiri T."/>
            <person name="Kaku Y."/>
            <person name="Kodaira H."/>
            <person name="Kondo H."/>
            <person name="Sugawara M."/>
            <person name="Takahashi M."/>
            <person name="Kanda K."/>
            <person name="Yokoi T."/>
            <person name="Furuya T."/>
            <person name="Kikkawa E."/>
            <person name="Omura Y."/>
            <person name="Abe K."/>
            <person name="Kamihara K."/>
            <person name="Katsuta N."/>
            <person name="Sato K."/>
            <person name="Tanikawa M."/>
            <person name="Yamazaki M."/>
            <person name="Ninomiya K."/>
            <person name="Ishibashi T."/>
            <person name="Yamashita H."/>
            <person name="Murakawa K."/>
            <person name="Fujimori K."/>
            <person name="Tanai H."/>
            <person name="Kimata M."/>
            <person name="Watanabe M."/>
            <person name="Hiraoka S."/>
            <person name="Chiba Y."/>
            <person name="Ishida S."/>
            <person name="Ono Y."/>
            <person name="Takiguchi S."/>
            <person name="Watanabe S."/>
            <person name="Yosida M."/>
            <person name="Hotuta T."/>
            <person name="Kusano J."/>
            <person name="Kanehori K."/>
            <person name="Takahashi-Fujii A."/>
            <person name="Hara H."/>
            <person name="Tanase T.-O."/>
            <person name="Nomura Y."/>
            <person name="Togiya S."/>
            <person name="Komai F."/>
            <person name="Hara R."/>
            <person name="Takeuchi K."/>
            <person name="Arita M."/>
            <person name="Imose N."/>
            <person name="Musashino K."/>
            <person name="Yuuki H."/>
            <person name="Oshima A."/>
            <person name="Sasaki N."/>
            <person name="Aotsuka S."/>
            <person name="Yoshikawa Y."/>
            <person name="Matsunawa H."/>
            <person name="Ichihara T."/>
            <person name="Shiohata N."/>
            <person name="Sano S."/>
            <person name="Moriya S."/>
            <person name="Momiyama H."/>
            <person name="Satoh N."/>
            <person name="Takami S."/>
            <person name="Terashima Y."/>
            <person name="Suzuki O."/>
            <person name="Nakagawa S."/>
            <person name="Senoh A."/>
            <person name="Mizoguchi H."/>
            <person name="Goto Y."/>
            <person name="Shimizu F."/>
            <person name="Wakebe H."/>
            <person name="Hishigaki H."/>
            <person name="Watanabe T."/>
            <person name="Sugiyama A."/>
            <person name="Takemoto M."/>
            <person name="Kawakami B."/>
            <person name="Yamazaki M."/>
            <person name="Watanabe K."/>
            <person name="Kumagai A."/>
            <person name="Itakura S."/>
            <person name="Fukuzumi Y."/>
            <person name="Fujimori Y."/>
            <person name="Komiyama M."/>
            <person name="Tashiro H."/>
            <person name="Tanigami A."/>
            <person name="Fujiwara T."/>
            <person name="Ono T."/>
            <person name="Yamada K."/>
            <person name="Fujii Y."/>
            <person name="Ozaki K."/>
            <person name="Hirao M."/>
            <person name="Ohmori Y."/>
            <person name="Kawabata A."/>
            <person name="Hikiji T."/>
            <person name="Kobatake N."/>
            <person name="Inagaki H."/>
            <person name="Ikema Y."/>
            <person name="Okamoto S."/>
            <person name="Okitani R."/>
            <person name="Kawakami T."/>
            <person name="Noguchi S."/>
            <person name="Itoh T."/>
            <person name="Shigeta K."/>
            <person name="Senba T."/>
            <person name="Matsumura K."/>
            <person name="Nakajima Y."/>
            <person name="Mizuno T."/>
            <person name="Morinaga M."/>
            <person name="Sasaki M."/>
            <person name="Togashi T."/>
            <person name="Oyama M."/>
            <person name="Hata H."/>
            <person name="Watanabe M."/>
            <person name="Komatsu T."/>
            <person name="Mizushima-Sugano J."/>
            <person name="Satoh T."/>
            <person name="Shirai Y."/>
            <person name="Takahashi Y."/>
            <person name="Nakagawa K."/>
            <person name="Okumura K."/>
            <person name="Nagase T."/>
            <person name="Nomura N."/>
            <person name="Kikuchi H."/>
            <person name="Masuho Y."/>
            <person name="Yamashita R."/>
            <person name="Nakai K."/>
            <person name="Yada T."/>
            <person name="Nakamura Y."/>
            <person name="Ohara O."/>
            <person name="Isogai T."/>
            <person name="Sugano S."/>
        </authorList>
    </citation>
    <scope>NUCLEOTIDE SEQUENCE [LARGE SCALE MRNA] OF 1-641 (ISOFORM 1)</scope>
    <scope>VARIANT TRP-638</scope>
    <source>
        <tissue>Thyroid</tissue>
    </source>
</reference>
<reference key="5">
    <citation type="journal article" date="2008" name="Proc. Natl. Acad. Sci. U.S.A.">
        <title>A quantitative atlas of mitotic phosphorylation.</title>
        <authorList>
            <person name="Dephoure N."/>
            <person name="Zhou C."/>
            <person name="Villen J."/>
            <person name="Beausoleil S.A."/>
            <person name="Bakalarski C.E."/>
            <person name="Elledge S.J."/>
            <person name="Gygi S.P."/>
        </authorList>
    </citation>
    <scope>PHOSPHORYLATION [LARGE SCALE ANALYSIS] AT THR-530 AND SER-546</scope>
    <scope>IDENTIFICATION BY MASS SPECTROMETRY [LARGE SCALE ANALYSIS]</scope>
    <source>
        <tissue>Cervix carcinoma</tissue>
    </source>
</reference>
<reference key="6">
    <citation type="submission" date="2006-11" db="PDB data bank">
        <title>Crystal structure of the human KIF9 motor domain in complex with ADP.</title>
        <authorList>
            <consortium name="Structural genomics consortium (SGC)"/>
        </authorList>
    </citation>
    <scope>X-RAY CRYSTALLOGRAPHY (2.00 ANGSTROMS) OF 2-340 IN COMPLEX WITH ADP</scope>
</reference>